<protein>
    <recommendedName>
        <fullName>Cyclin-dependent kinase 4 inhibitor C</fullName>
    </recommendedName>
    <alternativeName>
        <fullName>Cyclin-dependent kinase 6 inhibitor</fullName>
    </alternativeName>
    <alternativeName>
        <fullName>p18-INK4c</fullName>
    </alternativeName>
    <alternativeName>
        <fullName>p18-INK6</fullName>
    </alternativeName>
</protein>
<evidence type="ECO:0000269" key="1">
    <source>
    </source>
</evidence>
<evidence type="ECO:0000269" key="2">
    <source>
    </source>
</evidence>
<evidence type="ECO:0000269" key="3">
    <source>
    </source>
</evidence>
<evidence type="ECO:0000305" key="4"/>
<evidence type="ECO:0007829" key="5">
    <source>
        <dbReference type="PDB" id="1BU9"/>
    </source>
</evidence>
<evidence type="ECO:0007829" key="6">
    <source>
        <dbReference type="PDB" id="1IHB"/>
    </source>
</evidence>
<dbReference type="EMBL" id="U17074">
    <property type="protein sequence ID" value="AAC50074.1"/>
    <property type="molecule type" value="mRNA"/>
</dbReference>
<dbReference type="EMBL" id="AF041248">
    <property type="protein sequence ID" value="AAC39782.1"/>
    <property type="molecule type" value="mRNA"/>
</dbReference>
<dbReference type="EMBL" id="AF041250">
    <property type="protein sequence ID" value="AAC39783.1"/>
    <property type="molecule type" value="Genomic_DNA"/>
</dbReference>
<dbReference type="EMBL" id="AF041249">
    <property type="protein sequence ID" value="AAC39783.1"/>
    <property type="status" value="JOINED"/>
    <property type="molecule type" value="Genomic_DNA"/>
</dbReference>
<dbReference type="EMBL" id="AY094608">
    <property type="protein sequence ID" value="AAM11873.1"/>
    <property type="molecule type" value="Genomic_DNA"/>
</dbReference>
<dbReference type="EMBL" id="BC000598">
    <property type="protein sequence ID" value="AAH00598.1"/>
    <property type="molecule type" value="mRNA"/>
</dbReference>
<dbReference type="EMBL" id="BC005041">
    <property type="protein sequence ID" value="AAH05041.1"/>
    <property type="molecule type" value="mRNA"/>
</dbReference>
<dbReference type="EMBL" id="BC016173">
    <property type="protein sequence ID" value="AAH16173.1"/>
    <property type="molecule type" value="mRNA"/>
</dbReference>
<dbReference type="CCDS" id="CCDS555.1"/>
<dbReference type="PIR" id="A55479">
    <property type="entry name" value="A55479"/>
</dbReference>
<dbReference type="RefSeq" id="NP_001253.1">
    <property type="nucleotide sequence ID" value="NM_001262.3"/>
</dbReference>
<dbReference type="RefSeq" id="NP_001416604.1">
    <property type="nucleotide sequence ID" value="NM_001429675.1"/>
</dbReference>
<dbReference type="RefSeq" id="NP_523240.1">
    <property type="nucleotide sequence ID" value="NM_078626.3"/>
</dbReference>
<dbReference type="PDB" id="1BU9">
    <property type="method" value="NMR"/>
    <property type="chains" value="A=1-168"/>
</dbReference>
<dbReference type="PDB" id="1G3N">
    <property type="method" value="X-ray"/>
    <property type="resolution" value="2.90 A"/>
    <property type="chains" value="B/F=1-168"/>
</dbReference>
<dbReference type="PDB" id="1IHB">
    <property type="method" value="X-ray"/>
    <property type="resolution" value="1.95 A"/>
    <property type="chains" value="A/B=1-162"/>
</dbReference>
<dbReference type="PDB" id="1MX2">
    <property type="method" value="X-ray"/>
    <property type="resolution" value="2.25 A"/>
    <property type="chains" value="A/B=1-168"/>
</dbReference>
<dbReference type="PDB" id="1MX4">
    <property type="method" value="X-ray"/>
    <property type="resolution" value="2.00 A"/>
    <property type="chains" value="A/B=1-168"/>
</dbReference>
<dbReference type="PDB" id="1MX6">
    <property type="method" value="X-ray"/>
    <property type="resolution" value="2.00 A"/>
    <property type="chains" value="A/B=1-168"/>
</dbReference>
<dbReference type="PDBsum" id="1BU9"/>
<dbReference type="PDBsum" id="1G3N"/>
<dbReference type="PDBsum" id="1IHB"/>
<dbReference type="PDBsum" id="1MX2"/>
<dbReference type="PDBsum" id="1MX4"/>
<dbReference type="PDBsum" id="1MX6"/>
<dbReference type="SMR" id="P42773"/>
<dbReference type="BioGRID" id="107465">
    <property type="interactions" value="92"/>
</dbReference>
<dbReference type="FunCoup" id="P42773">
    <property type="interactions" value="1513"/>
</dbReference>
<dbReference type="IntAct" id="P42773">
    <property type="interactions" value="64"/>
</dbReference>
<dbReference type="MINT" id="P42773"/>
<dbReference type="STRING" id="9606.ENSP00000262662"/>
<dbReference type="iPTMnet" id="P42773"/>
<dbReference type="PhosphoSitePlus" id="P42773"/>
<dbReference type="BioMuta" id="CDKN2C"/>
<dbReference type="DMDM" id="1168870"/>
<dbReference type="jPOST" id="P42773"/>
<dbReference type="MassIVE" id="P42773"/>
<dbReference type="PaxDb" id="9606-ENSP00000262662"/>
<dbReference type="PeptideAtlas" id="P42773"/>
<dbReference type="ProteomicsDB" id="55557"/>
<dbReference type="Pumba" id="P42773"/>
<dbReference type="Antibodypedia" id="3941">
    <property type="antibodies" value="568 antibodies from 36 providers"/>
</dbReference>
<dbReference type="DNASU" id="1031"/>
<dbReference type="Ensembl" id="ENST00000262662.5">
    <property type="protein sequence ID" value="ENSP00000262662.1"/>
    <property type="gene ID" value="ENSG00000123080.12"/>
</dbReference>
<dbReference type="Ensembl" id="ENST00000371761.4">
    <property type="protein sequence ID" value="ENSP00000360826.3"/>
    <property type="gene ID" value="ENSG00000123080.12"/>
</dbReference>
<dbReference type="Ensembl" id="ENST00000396148.2">
    <property type="protein sequence ID" value="ENSP00000379452.1"/>
    <property type="gene ID" value="ENSG00000123080.12"/>
</dbReference>
<dbReference type="GeneID" id="1031"/>
<dbReference type="KEGG" id="hsa:1031"/>
<dbReference type="MANE-Select" id="ENST00000371761.4">
    <property type="protein sequence ID" value="ENSP00000360826.3"/>
    <property type="RefSeq nucleotide sequence ID" value="NM_078626.3"/>
    <property type="RefSeq protein sequence ID" value="NP_523240.1"/>
</dbReference>
<dbReference type="AGR" id="HGNC:1789"/>
<dbReference type="CTD" id="1031"/>
<dbReference type="DisGeNET" id="1031"/>
<dbReference type="GeneCards" id="CDKN2C"/>
<dbReference type="HGNC" id="HGNC:1789">
    <property type="gene designation" value="CDKN2C"/>
</dbReference>
<dbReference type="HPA" id="ENSG00000123080">
    <property type="expression patterns" value="Tissue enhanced (adipose tissue, lymphoid tissue)"/>
</dbReference>
<dbReference type="MalaCards" id="CDKN2C"/>
<dbReference type="MIM" id="603369">
    <property type="type" value="gene"/>
</dbReference>
<dbReference type="neXtProt" id="NX_P42773"/>
<dbReference type="OpenTargets" id="ENSG00000123080"/>
<dbReference type="Orphanet" id="652">
    <property type="disease" value="Multiple endocrine neoplasia type 1"/>
</dbReference>
<dbReference type="PharmGKB" id="PA26322"/>
<dbReference type="VEuPathDB" id="HostDB:ENSG00000123080"/>
<dbReference type="eggNOG" id="KOG0504">
    <property type="taxonomic scope" value="Eukaryota"/>
</dbReference>
<dbReference type="GeneTree" id="ENSGT00940000160194"/>
<dbReference type="HOGENOM" id="CLU_000134_37_0_1"/>
<dbReference type="InParanoid" id="P42773"/>
<dbReference type="OMA" id="MAEPLGN"/>
<dbReference type="OrthoDB" id="21416at2759"/>
<dbReference type="PAN-GO" id="P42773">
    <property type="GO annotations" value="7 GO annotations based on evolutionary models"/>
</dbReference>
<dbReference type="PhylomeDB" id="P42773"/>
<dbReference type="TreeFam" id="TF333311"/>
<dbReference type="PathwayCommons" id="P42773"/>
<dbReference type="Reactome" id="R-HSA-2559580">
    <property type="pathway name" value="Oxidative Stress Induced Senescence"/>
</dbReference>
<dbReference type="Reactome" id="R-HSA-2559582">
    <property type="pathway name" value="Senescence-Associated Secretory Phenotype (SASP)"/>
</dbReference>
<dbReference type="Reactome" id="R-HSA-2559585">
    <property type="pathway name" value="Oncogene Induced Senescence"/>
</dbReference>
<dbReference type="Reactome" id="R-HSA-69231">
    <property type="pathway name" value="Cyclin D associated events in G1"/>
</dbReference>
<dbReference type="SignaLink" id="P42773"/>
<dbReference type="SIGNOR" id="P42773"/>
<dbReference type="BioGRID-ORCS" id="1031">
    <property type="hits" value="33 hits in 1208 CRISPR screens"/>
</dbReference>
<dbReference type="ChiTaRS" id="CDKN2C">
    <property type="organism name" value="human"/>
</dbReference>
<dbReference type="EvolutionaryTrace" id="P42773"/>
<dbReference type="GeneWiki" id="CDKN2C"/>
<dbReference type="GenomeRNAi" id="1031"/>
<dbReference type="Pharos" id="P42773">
    <property type="development level" value="Tbio"/>
</dbReference>
<dbReference type="PRO" id="PR:P42773"/>
<dbReference type="Proteomes" id="UP000005640">
    <property type="component" value="Chromosome 1"/>
</dbReference>
<dbReference type="RNAct" id="P42773">
    <property type="molecule type" value="protein"/>
</dbReference>
<dbReference type="Bgee" id="ENSG00000123080">
    <property type="expression patterns" value="Expressed in ventricular zone and 211 other cell types or tissues"/>
</dbReference>
<dbReference type="ExpressionAtlas" id="P42773">
    <property type="expression patterns" value="baseline and differential"/>
</dbReference>
<dbReference type="GO" id="GO:0005737">
    <property type="term" value="C:cytoplasm"/>
    <property type="evidence" value="ECO:0000314"/>
    <property type="project" value="BHF-UCL"/>
</dbReference>
<dbReference type="GO" id="GO:0005829">
    <property type="term" value="C:cytosol"/>
    <property type="evidence" value="ECO:0000304"/>
    <property type="project" value="Reactome"/>
</dbReference>
<dbReference type="GO" id="GO:0005634">
    <property type="term" value="C:nucleus"/>
    <property type="evidence" value="ECO:0000314"/>
    <property type="project" value="BHF-UCL"/>
</dbReference>
<dbReference type="GO" id="GO:0004861">
    <property type="term" value="F:cyclin-dependent protein serine/threonine kinase inhibitor activity"/>
    <property type="evidence" value="ECO:0000314"/>
    <property type="project" value="BHF-UCL"/>
</dbReference>
<dbReference type="GO" id="GO:0019901">
    <property type="term" value="F:protein kinase binding"/>
    <property type="evidence" value="ECO:0000353"/>
    <property type="project" value="BHF-UCL"/>
</dbReference>
<dbReference type="GO" id="GO:0030308">
    <property type="term" value="P:negative regulation of cell growth"/>
    <property type="evidence" value="ECO:0000314"/>
    <property type="project" value="BHF-UCL"/>
</dbReference>
<dbReference type="GO" id="GO:0008285">
    <property type="term" value="P:negative regulation of cell population proliferation"/>
    <property type="evidence" value="ECO:0000314"/>
    <property type="project" value="BHF-UCL"/>
</dbReference>
<dbReference type="GO" id="GO:2000647">
    <property type="term" value="P:negative regulation of stem cell proliferation"/>
    <property type="evidence" value="ECO:0007669"/>
    <property type="project" value="Ensembl"/>
</dbReference>
<dbReference type="GO" id="GO:0048709">
    <property type="term" value="P:oligodendrocyte differentiation"/>
    <property type="evidence" value="ECO:0007669"/>
    <property type="project" value="Ensembl"/>
</dbReference>
<dbReference type="GO" id="GO:2000045">
    <property type="term" value="P:regulation of G1/S transition of mitotic cell cycle"/>
    <property type="evidence" value="ECO:0000314"/>
    <property type="project" value="BHF-UCL"/>
</dbReference>
<dbReference type="GO" id="GO:0072089">
    <property type="term" value="P:stem cell proliferation"/>
    <property type="evidence" value="ECO:0007669"/>
    <property type="project" value="Ensembl"/>
</dbReference>
<dbReference type="FunFam" id="1.25.40.20:FF:000148">
    <property type="entry name" value="cyclin-dependent kinase 4 inhibitor C"/>
    <property type="match status" value="1"/>
</dbReference>
<dbReference type="Gene3D" id="1.25.40.20">
    <property type="entry name" value="Ankyrin repeat-containing domain"/>
    <property type="match status" value="1"/>
</dbReference>
<dbReference type="InterPro" id="IPR050776">
    <property type="entry name" value="Ank_Repeat/CDKN_Inhibitor"/>
</dbReference>
<dbReference type="InterPro" id="IPR002110">
    <property type="entry name" value="Ankyrin_rpt"/>
</dbReference>
<dbReference type="InterPro" id="IPR036770">
    <property type="entry name" value="Ankyrin_rpt-contain_sf"/>
</dbReference>
<dbReference type="PANTHER" id="PTHR24201">
    <property type="entry name" value="ANK_REP_REGION DOMAIN-CONTAINING PROTEIN"/>
    <property type="match status" value="1"/>
</dbReference>
<dbReference type="PANTHER" id="PTHR24201:SF9">
    <property type="entry name" value="CYCLIN-DEPENDENT KINASE 4 INHIBITOR C"/>
    <property type="match status" value="1"/>
</dbReference>
<dbReference type="Pfam" id="PF12796">
    <property type="entry name" value="Ank_2"/>
    <property type="match status" value="1"/>
</dbReference>
<dbReference type="Pfam" id="PF13637">
    <property type="entry name" value="Ank_4"/>
    <property type="match status" value="1"/>
</dbReference>
<dbReference type="SMART" id="SM00248">
    <property type="entry name" value="ANK"/>
    <property type="match status" value="4"/>
</dbReference>
<dbReference type="SUPFAM" id="SSF48403">
    <property type="entry name" value="Ankyrin repeat"/>
    <property type="match status" value="1"/>
</dbReference>
<dbReference type="PROSITE" id="PS50297">
    <property type="entry name" value="ANK_REP_REGION"/>
    <property type="match status" value="1"/>
</dbReference>
<dbReference type="PROSITE" id="PS50088">
    <property type="entry name" value="ANK_REPEAT"/>
    <property type="match status" value="2"/>
</dbReference>
<comment type="function">
    <text>Interacts strongly with CDK6, weakly with CDK4. Inhibits cell growth and proliferation with a correlated dependence on endogenous retinoblastoma protein RB.</text>
</comment>
<comment type="subunit">
    <text>Heterodimer of p18 with CDK6.</text>
</comment>
<comment type="interaction">
    <interactant intactId="EBI-711290">
        <id>P42773</id>
    </interactant>
    <interactant intactId="EBI-2371423">
        <id>O43865</id>
        <label>AHCYL1</label>
    </interactant>
    <organismsDiffer>false</organismsDiffer>
    <experiments>10</experiments>
</comment>
<comment type="interaction">
    <interactant intactId="EBI-711290">
        <id>P42773</id>
    </interactant>
    <interactant intactId="EBI-77613">
        <id>P05067</id>
        <label>APP</label>
    </interactant>
    <organismsDiffer>false</organismsDiffer>
    <experiments>3</experiments>
</comment>
<comment type="interaction">
    <interactant intactId="EBI-711290">
        <id>P42773</id>
    </interactant>
    <interactant intactId="EBI-718729">
        <id>P55212</id>
        <label>CASP6</label>
    </interactant>
    <organismsDiffer>false</organismsDiffer>
    <experiments>3</experiments>
</comment>
<comment type="interaction">
    <interactant intactId="EBI-711290">
        <id>P42773</id>
    </interactant>
    <interactant intactId="EBI-295644">
        <id>P11802</id>
        <label>CDK4</label>
    </interactant>
    <organismsDiffer>false</organismsDiffer>
    <experiments>26</experiments>
</comment>
<comment type="interaction">
    <interactant intactId="EBI-711290">
        <id>P42773</id>
    </interactant>
    <interactant intactId="EBI-295663">
        <id>Q00534</id>
        <label>CDK6</label>
    </interactant>
    <organismsDiffer>false</organismsDiffer>
    <experiments>28</experiments>
</comment>
<comment type="interaction">
    <interactant intactId="EBI-711290">
        <id>P42773</id>
    </interactant>
    <interactant intactId="EBI-748171">
        <id>O43186</id>
        <label>CRX</label>
    </interactant>
    <organismsDiffer>false</organismsDiffer>
    <experiments>3</experiments>
</comment>
<comment type="interaction">
    <interactant intactId="EBI-711290">
        <id>P42773</id>
    </interactant>
    <interactant intactId="EBI-751587">
        <id>Q9GZU7</id>
        <label>CTDSP1</label>
    </interactant>
    <organismsDiffer>false</organismsDiffer>
    <experiments>3</experiments>
</comment>
<comment type="interaction">
    <interactant intactId="EBI-711290">
        <id>P42773</id>
    </interactant>
    <interactant intactId="EBI-473886">
        <id>O00291</id>
        <label>HIP1</label>
    </interactant>
    <organismsDiffer>false</organismsDiffer>
    <experiments>3</experiments>
</comment>
<comment type="interaction">
    <interactant intactId="EBI-711290">
        <id>P42773</id>
    </interactant>
    <interactant intactId="EBI-948001">
        <id>Q15323</id>
        <label>KRT31</label>
    </interactant>
    <organismsDiffer>false</organismsDiffer>
    <experiments>3</experiments>
</comment>
<comment type="interaction">
    <interactant intactId="EBI-711290">
        <id>P42773</id>
    </interactant>
    <interactant intactId="EBI-21591415">
        <id>P13473-2</id>
        <label>LAMP2</label>
    </interactant>
    <organismsDiffer>false</organismsDiffer>
    <experiments>3</experiments>
</comment>
<comment type="interaction">
    <interactant intactId="EBI-711290">
        <id>P42773</id>
    </interactant>
    <interactant intactId="EBI-372578">
        <id>Q9UJ70</id>
        <label>NAGK</label>
    </interactant>
    <organismsDiffer>false</organismsDiffer>
    <experiments>4</experiments>
</comment>
<comment type="interaction">
    <interactant intactId="EBI-711290">
        <id>P42773</id>
    </interactant>
    <interactant intactId="EBI-11526455">
        <id>Q9UJ70-2</id>
        <label>NAGK</label>
    </interactant>
    <organismsDiffer>false</organismsDiffer>
    <experiments>3</experiments>
</comment>
<comment type="interaction">
    <interactant intactId="EBI-711290">
        <id>P42773</id>
    </interactant>
    <interactant intactId="EBI-740897">
        <id>Q9GZT8</id>
        <label>NIF3L1</label>
    </interactant>
    <organismsDiffer>false</organismsDiffer>
    <experiments>6</experiments>
</comment>
<comment type="interaction">
    <interactant intactId="EBI-711290">
        <id>P42773</id>
    </interactant>
    <interactant intactId="EBI-10302990">
        <id>Q9BYU1</id>
        <label>PBX4</label>
    </interactant>
    <organismsDiffer>false</organismsDiffer>
    <experiments>3</experiments>
</comment>
<comment type="interaction">
    <interactant intactId="EBI-711290">
        <id>P42773</id>
    </interactant>
    <interactant intactId="EBI-949255">
        <id>Q58EX7</id>
        <label>PLEKHG4</label>
    </interactant>
    <organismsDiffer>false</organismsDiffer>
    <experiments>3</experiments>
</comment>
<comment type="interaction">
    <interactant intactId="EBI-711290">
        <id>P42773</id>
    </interactant>
    <interactant intactId="EBI-12029004">
        <id>P78424</id>
        <label>POU6F2</label>
    </interactant>
    <organismsDiffer>false</organismsDiffer>
    <experiments>3</experiments>
</comment>
<comment type="interaction">
    <interactant intactId="EBI-711290">
        <id>P42773</id>
    </interactant>
    <interactant intactId="EBI-5280197">
        <id>O75400-2</id>
        <label>PRPF40A</label>
    </interactant>
    <organismsDiffer>false</organismsDiffer>
    <experiments>3</experiments>
</comment>
<comment type="interaction">
    <interactant intactId="EBI-711290">
        <id>P42773</id>
    </interactant>
    <interactant intactId="EBI-307352">
        <id>Q04864</id>
        <label>REL</label>
    </interactant>
    <organismsDiffer>false</organismsDiffer>
    <experiments>4</experiments>
</comment>
<comment type="interaction">
    <interactant intactId="EBI-711290">
        <id>P42773</id>
    </interactant>
    <interactant intactId="EBI-10829018">
        <id>Q04864-2</id>
        <label>REL</label>
    </interactant>
    <organismsDiffer>false</organismsDiffer>
    <experiments>3</experiments>
</comment>
<comment type="interaction">
    <interactant intactId="EBI-711290">
        <id>P42773</id>
    </interactant>
    <interactant intactId="EBI-741237">
        <id>O60504</id>
        <label>SORBS3</label>
    </interactant>
    <organismsDiffer>false</organismsDiffer>
    <experiments>3</experiments>
</comment>
<comment type="interaction">
    <interactant intactId="EBI-711290">
        <id>P42773</id>
    </interactant>
    <interactant intactId="EBI-722877">
        <id>Q99081</id>
        <label>TCF12</label>
    </interactant>
    <organismsDiffer>false</organismsDiffer>
    <experiments>5</experiments>
</comment>
<comment type="interaction">
    <interactant intactId="EBI-711290">
        <id>P42773</id>
    </interactant>
    <interactant intactId="EBI-11952764">
        <id>Q99081-3</id>
        <label>TCF12</label>
    </interactant>
    <organismsDiffer>false</organismsDiffer>
    <experiments>4</experiments>
</comment>
<comment type="interaction">
    <interactant intactId="EBI-711290">
        <id>P42773</id>
    </interactant>
    <interactant intactId="EBI-533224">
        <id>P15884</id>
        <label>TCF4</label>
    </interactant>
    <organismsDiffer>false</organismsDiffer>
    <experiments>4</experiments>
</comment>
<comment type="interaction">
    <interactant intactId="EBI-711290">
        <id>P42773</id>
    </interactant>
    <interactant intactId="EBI-13636688">
        <id>P15884-3</id>
        <label>TCF4</label>
    </interactant>
    <organismsDiffer>false</organismsDiffer>
    <experiments>3</experiments>
</comment>
<comment type="tissue specificity">
    <text>Highest levels found in skeletal muscle. Also found in pancreas and heart.</text>
</comment>
<comment type="similarity">
    <text evidence="4">Belongs to the CDKN2 cyclin-dependent kinase inhibitor family.</text>
</comment>
<name>CDN2C_HUMAN</name>
<keyword id="KW-0002">3D-structure</keyword>
<keyword id="KW-0040">ANK repeat</keyword>
<keyword id="KW-0131">Cell cycle</keyword>
<keyword id="KW-1267">Proteomics identification</keyword>
<keyword id="KW-1185">Reference proteome</keyword>
<keyword id="KW-0677">Repeat</keyword>
<accession>P42773</accession>
<accession>Q8TB83</accession>
<gene>
    <name type="primary">CDKN2C</name>
    <name type="synonym">CDKN6</name>
</gene>
<proteinExistence type="evidence at protein level"/>
<organism>
    <name type="scientific">Homo sapiens</name>
    <name type="common">Human</name>
    <dbReference type="NCBI Taxonomy" id="9606"/>
    <lineage>
        <taxon>Eukaryota</taxon>
        <taxon>Metazoa</taxon>
        <taxon>Chordata</taxon>
        <taxon>Craniata</taxon>
        <taxon>Vertebrata</taxon>
        <taxon>Euteleostomi</taxon>
        <taxon>Mammalia</taxon>
        <taxon>Eutheria</taxon>
        <taxon>Euarchontoglires</taxon>
        <taxon>Primates</taxon>
        <taxon>Haplorrhini</taxon>
        <taxon>Catarrhini</taxon>
        <taxon>Hominidae</taxon>
        <taxon>Homo</taxon>
    </lineage>
</organism>
<feature type="chain" id="PRO_0000144186" description="Cyclin-dependent kinase 4 inhibitor C">
    <location>
        <begin position="1"/>
        <end position="168"/>
    </location>
</feature>
<feature type="repeat" description="ANK 1">
    <location>
        <begin position="4"/>
        <end position="33"/>
    </location>
</feature>
<feature type="repeat" description="ANK 2">
    <location>
        <begin position="37"/>
        <end position="65"/>
    </location>
</feature>
<feature type="repeat" description="ANK 3">
    <location>
        <begin position="69"/>
        <end position="98"/>
    </location>
</feature>
<feature type="repeat" description="ANK 4">
    <location>
        <begin position="102"/>
        <end position="132"/>
    </location>
</feature>
<feature type="sequence variant" id="VAR_001490" description="In breast cancer; loss of CDK6 interaction; dbSNP:rs771853517." evidence="2 3">
    <original>A</original>
    <variation>P</variation>
    <location>
        <position position="72"/>
    </location>
</feature>
<feature type="sequence variant" id="VAR_038604" description="In dbSNP:rs17851380." evidence="1">
    <original>T</original>
    <variation>M</variation>
    <location>
        <position position="126"/>
    </location>
</feature>
<feature type="helix" evidence="6">
    <location>
        <begin position="6"/>
        <end position="15"/>
    </location>
</feature>
<feature type="helix" evidence="6">
    <location>
        <begin position="18"/>
        <end position="24"/>
    </location>
</feature>
<feature type="turn" evidence="5">
    <location>
        <begin position="36"/>
        <end position="38"/>
    </location>
</feature>
<feature type="helix" evidence="6">
    <location>
        <begin position="41"/>
        <end position="44"/>
    </location>
</feature>
<feature type="turn" evidence="5">
    <location>
        <begin position="45"/>
        <end position="48"/>
    </location>
</feature>
<feature type="helix" evidence="6">
    <location>
        <begin position="50"/>
        <end position="58"/>
    </location>
</feature>
<feature type="helix" evidence="6">
    <location>
        <begin position="73"/>
        <end position="80"/>
    </location>
</feature>
<feature type="helix" evidence="6">
    <location>
        <begin position="83"/>
        <end position="91"/>
    </location>
</feature>
<feature type="strand" evidence="5">
    <location>
        <begin position="101"/>
        <end position="103"/>
    </location>
</feature>
<feature type="helix" evidence="6">
    <location>
        <begin position="106"/>
        <end position="112"/>
    </location>
</feature>
<feature type="helix" evidence="6">
    <location>
        <begin position="116"/>
        <end position="125"/>
    </location>
</feature>
<feature type="strand" evidence="5">
    <location>
        <begin position="135"/>
        <end position="137"/>
    </location>
</feature>
<feature type="helix" evidence="6">
    <location>
        <begin position="140"/>
        <end position="146"/>
    </location>
</feature>
<feature type="helix" evidence="6">
    <location>
        <begin position="150"/>
        <end position="158"/>
    </location>
</feature>
<sequence length="168" mass="18127">MAEPWGNELASAAARGDLEQLTSLLQNNVNVNAQNGFGRTALQVMKLGNPEIARRLLLRGANPDLKDRTGFAVIHDAARAGFLDTLQTLLEFQADVNIEDNEGNLPLHLAAKEGHLRVVEFLVKHTASNVGHRNHKGDTACDLARLYGRNEVVSLMQANGAGGATNLQ</sequence>
<reference key="1">
    <citation type="journal article" date="1994" name="Genes Dev.">
        <title>Growth suppression by p18, a p16INK4/MTS1- and p14INK4B/MTS2-related CDK6 inhibitor, correlates with wild-type pRb function.</title>
        <authorList>
            <person name="Guan K.-L."/>
            <person name="Jenkins C.W."/>
            <person name="Li Y."/>
            <person name="Nichols M.A."/>
            <person name="Wu X."/>
            <person name="O'Keefe C.L."/>
            <person name="Matera G.A."/>
            <person name="Xiong Y."/>
        </authorList>
    </citation>
    <scope>NUCLEOTIDE SEQUENCE [MRNA]</scope>
</reference>
<reference key="2">
    <citation type="journal article" date="1998" name="Biochem. Biophys. Res. Commun.">
        <title>Structure of the gene encoding the human cyclin-dependent kinase inhibitor p18 and mutational analysis in breast cancer.</title>
        <authorList>
            <person name="Blais A."/>
            <person name="Labrie Y."/>
            <person name="Pouliot F."/>
            <person name="Lachance Y."/>
            <person name="Labrie C."/>
        </authorList>
    </citation>
    <scope>NUCLEOTIDE SEQUENCE [GENOMIC DNA / MRNA]</scope>
    <scope>VARIANT BREAST CANCER PRO-72</scope>
    <source>
        <tissue>Mammary gland</tissue>
    </source>
</reference>
<reference key="3">
    <citation type="submission" date="2002-04" db="EMBL/GenBank/DDBJ databases">
        <authorList>
            <consortium name="NIEHS SNPs program"/>
        </authorList>
    </citation>
    <scope>NUCLEOTIDE SEQUENCE [GENOMIC DNA]</scope>
</reference>
<reference key="4">
    <citation type="journal article" date="2004" name="Genome Res.">
        <title>The status, quality, and expansion of the NIH full-length cDNA project: the Mammalian Gene Collection (MGC).</title>
        <authorList>
            <consortium name="The MGC Project Team"/>
        </authorList>
    </citation>
    <scope>NUCLEOTIDE SEQUENCE [LARGE SCALE MRNA]</scope>
    <scope>VARIANT MET-126</scope>
    <source>
        <tissue>Brain</tissue>
        <tissue>Kidney</tissue>
        <tissue>Uterus</tissue>
    </source>
</reference>
<reference key="5">
    <citation type="journal article" date="2011" name="BMC Syst. Biol.">
        <title>Initial characterization of the human central proteome.</title>
        <authorList>
            <person name="Burkard T.R."/>
            <person name="Planyavsky M."/>
            <person name="Kaupe I."/>
            <person name="Breitwieser F.P."/>
            <person name="Buerckstuemmer T."/>
            <person name="Bennett K.L."/>
            <person name="Superti-Furga G."/>
            <person name="Colinge J."/>
        </authorList>
    </citation>
    <scope>IDENTIFICATION BY MASS SPECTROMETRY [LARGE SCALE ANALYSIS]</scope>
</reference>
<reference key="6">
    <citation type="journal article" date="1998" name="Nat. Struct. Biol.">
        <title>Crystal structure of the CDK4/6 inhibitory protein p18INK4c provides insights into ankyrin-like repeat structure/function and tumor-derived p16INK4 mutations.</title>
        <authorList>
            <person name="Venkataramani R."/>
            <person name="Swaminathan K."/>
            <person name="Marmorstein R."/>
        </authorList>
    </citation>
    <scope>X-RAY CRYSTALLOGRAPHY (1.95 ANGSTROMS)</scope>
</reference>
<reference key="7">
    <citation type="journal article" date="1999" name="Biochemistry">
        <title>Tumor suppressor INK4: determination of the solution structure of p18INK4C and demonstration of the functional significance of loops in p18INK4C and p16INK4A.</title>
        <authorList>
            <person name="Li J."/>
            <person name="Byeon I.-J.L."/>
            <person name="Ericson K."/>
            <person name="Poi M.-J."/>
            <person name="O'Maille P."/>
            <person name="Selby T."/>
            <person name="Tsai M.-D."/>
        </authorList>
    </citation>
    <scope>STRUCTURE BY NMR</scope>
</reference>
<reference key="8">
    <citation type="journal article" date="1996" name="Cancer Res.">
        <title>A p18 mutant defective in CDK6 binding in human breast cancer cells.</title>
        <authorList>
            <person name="Lapointe J."/>
            <person name="Lachance Y."/>
            <person name="Labrie Y."/>
            <person name="Labrie C."/>
        </authorList>
    </citation>
    <scope>VARIANT BREAST CANCER PRO-72</scope>
</reference>